<keyword id="KW-0378">Hydrolase</keyword>
<keyword id="KW-0479">Metal-binding</keyword>
<keyword id="KW-1185">Reference proteome</keyword>
<keyword id="KW-0862">Zinc</keyword>
<reference key="1">
    <citation type="journal article" date="2004" name="Nucleic Acids Res.">
        <title>Genome sequence of Symbiobacterium thermophilum, an uncultivable bacterium that depends on microbial commensalism.</title>
        <authorList>
            <person name="Ueda K."/>
            <person name="Yamashita A."/>
            <person name="Ishikawa J."/>
            <person name="Shimada M."/>
            <person name="Watsuji T."/>
            <person name="Morimura K."/>
            <person name="Ikeda H."/>
            <person name="Hattori M."/>
            <person name="Beppu T."/>
        </authorList>
    </citation>
    <scope>NUCLEOTIDE SEQUENCE [LARGE SCALE GENOMIC DNA]</scope>
    <source>
        <strain>DSM 24528 / JCM 14929 / IAM 14863 / T</strain>
    </source>
</reference>
<feature type="chain" id="PRO_0000312459" description="5-methylthioadenosine/S-adenosylhomocysteine deaminase">
    <location>
        <begin position="1"/>
        <end position="436"/>
    </location>
</feature>
<feature type="binding site" evidence="1">
    <location>
        <position position="66"/>
    </location>
    <ligand>
        <name>Zn(2+)</name>
        <dbReference type="ChEBI" id="CHEBI:29105"/>
    </ligand>
</feature>
<feature type="binding site" evidence="1">
    <location>
        <position position="68"/>
    </location>
    <ligand>
        <name>Zn(2+)</name>
        <dbReference type="ChEBI" id="CHEBI:29105"/>
    </ligand>
</feature>
<feature type="binding site" evidence="1">
    <location>
        <position position="95"/>
    </location>
    <ligand>
        <name>substrate</name>
    </ligand>
</feature>
<feature type="binding site" evidence="1">
    <location>
        <position position="147"/>
    </location>
    <ligand>
        <name>substrate</name>
    </ligand>
</feature>
<feature type="binding site" evidence="1">
    <location>
        <position position="161"/>
    </location>
    <ligand>
        <name>substrate</name>
    </ligand>
</feature>
<feature type="binding site" evidence="1">
    <location>
        <position position="187"/>
    </location>
    <ligand>
        <name>substrate</name>
    </ligand>
</feature>
<feature type="binding site" evidence="1">
    <location>
        <position position="214"/>
    </location>
    <ligand>
        <name>Zn(2+)</name>
        <dbReference type="ChEBI" id="CHEBI:29105"/>
    </ligand>
</feature>
<feature type="binding site" evidence="1">
    <location>
        <position position="217"/>
    </location>
    <ligand>
        <name>substrate</name>
    </ligand>
</feature>
<feature type="binding site" evidence="1">
    <location>
        <position position="303"/>
    </location>
    <ligand>
        <name>substrate</name>
    </ligand>
</feature>
<feature type="binding site" evidence="1">
    <location>
        <position position="303"/>
    </location>
    <ligand>
        <name>Zn(2+)</name>
        <dbReference type="ChEBI" id="CHEBI:29105"/>
    </ligand>
</feature>
<protein>
    <recommendedName>
        <fullName evidence="1">5-methylthioadenosine/S-adenosylhomocysteine deaminase</fullName>
        <shortName evidence="1">MTA/SAH deaminase</shortName>
        <ecNumber evidence="1">3.5.4.28</ecNumber>
        <ecNumber evidence="1">3.5.4.31</ecNumber>
    </recommendedName>
</protein>
<name>MTAD_SYMTH</name>
<evidence type="ECO:0000255" key="1">
    <source>
        <dbReference type="HAMAP-Rule" id="MF_01281"/>
    </source>
</evidence>
<sequence>MERLVIEGGTVLPMTGQADVYENGVVLVEAGRIVYAGPRDGAPHLAGARRIDASGRIVMPGIVNTHCHAAMTLLRGYADDMRLMEWLQTKIWPAEARMTADDVYWGTALGAYEMLSGGITTFLDMYFPADAVARAIQDTGIRGIVARGIIGVGGPSEALSRLDESREAFHRWNGKAGGRITFMVGPHAPYTCPPDALQACAELADELGVGIHIHLSETRDEVEEARRNWGKSPIRHVYDLGLMKGRHVVAAHCVHVDDDDIAILAETGTGVCHCPVSNLKLASGRTPVAKMRRKGVAVGFGTDGASSENMLHILGSEMRIGAIQAKELEGDPAVYTAYDAVAMATIEAARVLGMESEIGSLEPGKKADLILIDAERPHLTPNHDVFALIAYSALPGDVVMTIVDGRIVYEDGRLTTMDGREIMARVREAAARLVRE</sequence>
<comment type="function">
    <text evidence="1">Catalyzes the deamination of 5-methylthioadenosine and S-adenosyl-L-homocysteine into 5-methylthioinosine and S-inosyl-L-homocysteine, respectively. Is also able to deaminate adenosine.</text>
</comment>
<comment type="catalytic activity">
    <reaction evidence="1">
        <text>S-adenosyl-L-homocysteine + H2O + H(+) = S-inosyl-L-homocysteine + NH4(+)</text>
        <dbReference type="Rhea" id="RHEA:20716"/>
        <dbReference type="ChEBI" id="CHEBI:15377"/>
        <dbReference type="ChEBI" id="CHEBI:15378"/>
        <dbReference type="ChEBI" id="CHEBI:28938"/>
        <dbReference type="ChEBI" id="CHEBI:57856"/>
        <dbReference type="ChEBI" id="CHEBI:57985"/>
        <dbReference type="EC" id="3.5.4.28"/>
    </reaction>
</comment>
<comment type="catalytic activity">
    <reaction evidence="1">
        <text>S-methyl-5'-thioadenosine + H2O + H(+) = S-methyl-5'-thioinosine + NH4(+)</text>
        <dbReference type="Rhea" id="RHEA:25025"/>
        <dbReference type="ChEBI" id="CHEBI:15377"/>
        <dbReference type="ChEBI" id="CHEBI:15378"/>
        <dbReference type="ChEBI" id="CHEBI:17509"/>
        <dbReference type="ChEBI" id="CHEBI:28938"/>
        <dbReference type="ChEBI" id="CHEBI:48595"/>
        <dbReference type="EC" id="3.5.4.31"/>
    </reaction>
</comment>
<comment type="cofactor">
    <cofactor evidence="1">
        <name>Zn(2+)</name>
        <dbReference type="ChEBI" id="CHEBI:29105"/>
    </cofactor>
    <text evidence="1">Binds 1 zinc ion per subunit.</text>
</comment>
<comment type="similarity">
    <text evidence="1">Belongs to the metallo-dependent hydrolases superfamily. MTA/SAH deaminase family.</text>
</comment>
<organism>
    <name type="scientific">Symbiobacterium thermophilum (strain DSM 24528 / JCM 14929 / IAM 14863 / T)</name>
    <dbReference type="NCBI Taxonomy" id="292459"/>
    <lineage>
        <taxon>Bacteria</taxon>
        <taxon>Bacillati</taxon>
        <taxon>Bacillota</taxon>
        <taxon>Clostridia</taxon>
        <taxon>Eubacteriales</taxon>
        <taxon>Symbiobacteriaceae</taxon>
        <taxon>Symbiobacterium</taxon>
    </lineage>
</organism>
<proteinExistence type="inferred from homology"/>
<gene>
    <name evidence="1" type="primary">mtaD</name>
    <name type="ordered locus">STH1703</name>
</gene>
<accession>Q67NQ5</accession>
<dbReference type="EC" id="3.5.4.28" evidence="1"/>
<dbReference type="EC" id="3.5.4.31" evidence="1"/>
<dbReference type="EMBL" id="AP006840">
    <property type="protein sequence ID" value="BAD40688.1"/>
    <property type="molecule type" value="Genomic_DNA"/>
</dbReference>
<dbReference type="RefSeq" id="WP_011195831.1">
    <property type="nucleotide sequence ID" value="NC_006177.1"/>
</dbReference>
<dbReference type="SMR" id="Q67NQ5"/>
<dbReference type="STRING" id="292459.STH1703"/>
<dbReference type="KEGG" id="sth:STH1703"/>
<dbReference type="eggNOG" id="COG0402">
    <property type="taxonomic scope" value="Bacteria"/>
</dbReference>
<dbReference type="HOGENOM" id="CLU_012358_2_1_9"/>
<dbReference type="OrthoDB" id="9807210at2"/>
<dbReference type="Proteomes" id="UP000000417">
    <property type="component" value="Chromosome"/>
</dbReference>
<dbReference type="GO" id="GO:0090614">
    <property type="term" value="F:5'-methylthioadenosine deaminase activity"/>
    <property type="evidence" value="ECO:0007669"/>
    <property type="project" value="UniProtKB-UniRule"/>
</dbReference>
<dbReference type="GO" id="GO:0046872">
    <property type="term" value="F:metal ion binding"/>
    <property type="evidence" value="ECO:0007669"/>
    <property type="project" value="UniProtKB-KW"/>
</dbReference>
<dbReference type="GO" id="GO:0050270">
    <property type="term" value="F:S-adenosylhomocysteine deaminase activity"/>
    <property type="evidence" value="ECO:0007669"/>
    <property type="project" value="UniProtKB-UniRule"/>
</dbReference>
<dbReference type="CDD" id="cd01298">
    <property type="entry name" value="ATZ_TRZ_like"/>
    <property type="match status" value="1"/>
</dbReference>
<dbReference type="FunFam" id="3.20.20.140:FF:000014">
    <property type="entry name" value="5-methylthioadenosine/S-adenosylhomocysteine deaminase"/>
    <property type="match status" value="1"/>
</dbReference>
<dbReference type="Gene3D" id="3.20.20.140">
    <property type="entry name" value="Metal-dependent hydrolases"/>
    <property type="match status" value="1"/>
</dbReference>
<dbReference type="Gene3D" id="2.30.40.10">
    <property type="entry name" value="Urease, subunit C, domain 1"/>
    <property type="match status" value="1"/>
</dbReference>
<dbReference type="HAMAP" id="MF_01281">
    <property type="entry name" value="MTA_SAH_deamin"/>
    <property type="match status" value="1"/>
</dbReference>
<dbReference type="InterPro" id="IPR006680">
    <property type="entry name" value="Amidohydro-rel"/>
</dbReference>
<dbReference type="InterPro" id="IPR023512">
    <property type="entry name" value="Deaminase_MtaD/DadD"/>
</dbReference>
<dbReference type="InterPro" id="IPR011059">
    <property type="entry name" value="Metal-dep_hydrolase_composite"/>
</dbReference>
<dbReference type="InterPro" id="IPR032466">
    <property type="entry name" value="Metal_Hydrolase"/>
</dbReference>
<dbReference type="InterPro" id="IPR050287">
    <property type="entry name" value="MTA/SAH_deaminase"/>
</dbReference>
<dbReference type="PANTHER" id="PTHR43794:SF11">
    <property type="entry name" value="AMIDOHYDROLASE-RELATED DOMAIN-CONTAINING PROTEIN"/>
    <property type="match status" value="1"/>
</dbReference>
<dbReference type="PANTHER" id="PTHR43794">
    <property type="entry name" value="AMINOHYDROLASE SSNA-RELATED"/>
    <property type="match status" value="1"/>
</dbReference>
<dbReference type="Pfam" id="PF01979">
    <property type="entry name" value="Amidohydro_1"/>
    <property type="match status" value="1"/>
</dbReference>
<dbReference type="SUPFAM" id="SSF51338">
    <property type="entry name" value="Composite domain of metallo-dependent hydrolases"/>
    <property type="match status" value="1"/>
</dbReference>
<dbReference type="SUPFAM" id="SSF51556">
    <property type="entry name" value="Metallo-dependent hydrolases"/>
    <property type="match status" value="1"/>
</dbReference>